<name>PA_I57A1</name>
<evidence type="ECO:0000250" key="1">
    <source>
        <dbReference type="UniProtKB" id="P03433"/>
    </source>
</evidence>
<evidence type="ECO:0000255" key="2">
    <source>
        <dbReference type="HAMAP-Rule" id="MF_04063"/>
    </source>
</evidence>
<accession>P26122</accession>
<organism>
    <name type="scientific">Influenza A virus (strain A/Leningrad/134/1957 H2N2)</name>
    <dbReference type="NCBI Taxonomy" id="387163"/>
    <lineage>
        <taxon>Viruses</taxon>
        <taxon>Riboviria</taxon>
        <taxon>Orthornavirae</taxon>
        <taxon>Negarnaviricota</taxon>
        <taxon>Polyploviricotina</taxon>
        <taxon>Insthoviricetes</taxon>
        <taxon>Articulavirales</taxon>
        <taxon>Orthomyxoviridae</taxon>
        <taxon>Alphainfluenzavirus</taxon>
        <taxon>Alphainfluenzavirus influenzae</taxon>
        <taxon>Influenza A virus</taxon>
    </lineage>
</organism>
<feature type="chain" id="PRO_0000078790" description="Polymerase acidic protein">
    <location>
        <begin position="1"/>
        <end position="716"/>
    </location>
</feature>
<feature type="short sequence motif" description="Nuclear localization signal 1 (NLS1)" evidence="1 2">
    <location>
        <begin position="124"/>
        <end position="139"/>
    </location>
</feature>
<feature type="short sequence motif" description="Nuclear localization signal 2 (NLS2)" evidence="1 2">
    <location>
        <begin position="184"/>
        <end position="247"/>
    </location>
</feature>
<feature type="binding site" evidence="2">
    <location>
        <position position="41"/>
    </location>
    <ligand>
        <name>Mn(2+)</name>
        <dbReference type="ChEBI" id="CHEBI:29035"/>
        <label>1</label>
    </ligand>
</feature>
<feature type="binding site" evidence="2">
    <location>
        <position position="80"/>
    </location>
    <ligand>
        <name>Mn(2+)</name>
        <dbReference type="ChEBI" id="CHEBI:29035"/>
        <label>2</label>
    </ligand>
</feature>
<feature type="binding site" evidence="2">
    <location>
        <position position="108"/>
    </location>
    <ligand>
        <name>Mn(2+)</name>
        <dbReference type="ChEBI" id="CHEBI:29035"/>
        <label>1</label>
    </ligand>
</feature>
<feature type="binding site" evidence="2">
    <location>
        <position position="108"/>
    </location>
    <ligand>
        <name>Mn(2+)</name>
        <dbReference type="ChEBI" id="CHEBI:29035"/>
        <label>2</label>
    </ligand>
</feature>
<feature type="binding site" evidence="2">
    <location>
        <position position="119"/>
    </location>
    <ligand>
        <name>Mn(2+)</name>
        <dbReference type="ChEBI" id="CHEBI:29035"/>
        <label>1</label>
    </ligand>
</feature>
<feature type="binding site" evidence="2">
    <location>
        <position position="120"/>
    </location>
    <ligand>
        <name>Mn(2+)</name>
        <dbReference type="ChEBI" id="CHEBI:29035"/>
        <label>1</label>
    </ligand>
</feature>
<reference key="1">
    <citation type="journal article" date="1992" name="Virology">
        <title>Sequence changes in the live attenuated, cold-adapted variants of influenza A/Leningrad/134/57 (H2N2) virus.</title>
        <authorList>
            <person name="Klimov A.I."/>
            <person name="Cox N.J."/>
            <person name="Yotov W.V."/>
            <person name="Rocha E."/>
            <person name="Alexandrova G.I."/>
            <person name="Kendal A.P."/>
        </authorList>
    </citation>
    <scope>NUCLEOTIDE SEQUENCE</scope>
</reference>
<protein>
    <recommendedName>
        <fullName evidence="2">Polymerase acidic protein</fullName>
        <ecNumber evidence="2">3.1.-.-</ecNumber>
    </recommendedName>
    <alternativeName>
        <fullName evidence="2">RNA-directed RNA polymerase subunit P2</fullName>
    </alternativeName>
</protein>
<proteinExistence type="inferred from homology"/>
<gene>
    <name evidence="2" type="primary">PA</name>
</gene>
<keyword id="KW-1157">Cap snatching</keyword>
<keyword id="KW-0255">Endonuclease</keyword>
<keyword id="KW-1262">Eukaryotic host gene expression shutoff by virus</keyword>
<keyword id="KW-1191">Eukaryotic host transcription shutoff by virus</keyword>
<keyword id="KW-1035">Host cytoplasm</keyword>
<keyword id="KW-1190">Host gene expression shutoff by virus</keyword>
<keyword id="KW-1048">Host nucleus</keyword>
<keyword id="KW-0945">Host-virus interaction</keyword>
<keyword id="KW-0378">Hydrolase</keyword>
<keyword id="KW-1104">Inhibition of host RNA polymerase II by virus</keyword>
<keyword id="KW-0464">Manganese</keyword>
<keyword id="KW-0479">Metal-binding</keyword>
<keyword id="KW-0540">Nuclease</keyword>
<keyword id="KW-0597">Phosphoprotein</keyword>
<keyword id="KW-0688">Ribosomal frameshifting</keyword>
<dbReference type="EC" id="3.1.-.-" evidence="2"/>
<dbReference type="EMBL" id="M81573">
    <property type="protein sequence ID" value="AAA19207.1"/>
    <property type="molecule type" value="Unassigned_RNA"/>
</dbReference>
<dbReference type="SMR" id="P26122"/>
<dbReference type="MEROPS" id="S62.001"/>
<dbReference type="GO" id="GO:0030430">
    <property type="term" value="C:host cell cytoplasm"/>
    <property type="evidence" value="ECO:0007669"/>
    <property type="project" value="UniProtKB-SubCell"/>
</dbReference>
<dbReference type="GO" id="GO:0042025">
    <property type="term" value="C:host cell nucleus"/>
    <property type="evidence" value="ECO:0007669"/>
    <property type="project" value="UniProtKB-SubCell"/>
</dbReference>
<dbReference type="GO" id="GO:0004519">
    <property type="term" value="F:endonuclease activity"/>
    <property type="evidence" value="ECO:0007669"/>
    <property type="project" value="UniProtKB-KW"/>
</dbReference>
<dbReference type="GO" id="GO:0046872">
    <property type="term" value="F:metal ion binding"/>
    <property type="evidence" value="ECO:0007669"/>
    <property type="project" value="UniProtKB-KW"/>
</dbReference>
<dbReference type="GO" id="GO:0003723">
    <property type="term" value="F:RNA binding"/>
    <property type="evidence" value="ECO:0007669"/>
    <property type="project" value="UniProtKB-UniRule"/>
</dbReference>
<dbReference type="GO" id="GO:0075526">
    <property type="term" value="P:cap snatching"/>
    <property type="evidence" value="ECO:0007669"/>
    <property type="project" value="UniProtKB-UniRule"/>
</dbReference>
<dbReference type="GO" id="GO:0006351">
    <property type="term" value="P:DNA-templated transcription"/>
    <property type="evidence" value="ECO:0007669"/>
    <property type="project" value="UniProtKB-UniRule"/>
</dbReference>
<dbReference type="GO" id="GO:0039657">
    <property type="term" value="P:symbiont-mediated suppression of host gene expression"/>
    <property type="evidence" value="ECO:0007669"/>
    <property type="project" value="UniProtKB-KW"/>
</dbReference>
<dbReference type="GO" id="GO:0039523">
    <property type="term" value="P:symbiont-mediated suppression of host mRNA transcription via inhibition of RNA polymerase II activity"/>
    <property type="evidence" value="ECO:0007669"/>
    <property type="project" value="UniProtKB-UniRule"/>
</dbReference>
<dbReference type="GO" id="GO:0039694">
    <property type="term" value="P:viral RNA genome replication"/>
    <property type="evidence" value="ECO:0007669"/>
    <property type="project" value="InterPro"/>
</dbReference>
<dbReference type="GO" id="GO:0075523">
    <property type="term" value="P:viral translational frameshifting"/>
    <property type="evidence" value="ECO:0007669"/>
    <property type="project" value="UniProtKB-KW"/>
</dbReference>
<dbReference type="FunFam" id="3.40.91.90:FF:000001">
    <property type="entry name" value="Polymerase acidic protein"/>
    <property type="match status" value="1"/>
</dbReference>
<dbReference type="Gene3D" id="3.40.91.90">
    <property type="entry name" value="Influenza RNA-dependent RNA polymerase subunit PA, endonuclease domain"/>
    <property type="match status" value="1"/>
</dbReference>
<dbReference type="HAMAP" id="MF_04063">
    <property type="entry name" value="INFV_PA"/>
    <property type="match status" value="1"/>
</dbReference>
<dbReference type="InterPro" id="IPR037534">
    <property type="entry name" value="INFV_PA"/>
</dbReference>
<dbReference type="InterPro" id="IPR001009">
    <property type="entry name" value="PA/PA-X"/>
</dbReference>
<dbReference type="InterPro" id="IPR038372">
    <property type="entry name" value="PA/PA-X_sf"/>
</dbReference>
<dbReference type="Pfam" id="PF00603">
    <property type="entry name" value="Flu_PA"/>
    <property type="match status" value="1"/>
</dbReference>
<organismHost>
    <name type="scientific">Aves</name>
    <dbReference type="NCBI Taxonomy" id="8782"/>
</organismHost>
<organismHost>
    <name type="scientific">Homo sapiens</name>
    <name type="common">Human</name>
    <dbReference type="NCBI Taxonomy" id="9606"/>
</organismHost>
<sequence>MEEFVRQCFNPMIVELAEKAMKEYGEDLKIETNKFAAICTHLEVCFMYSDFHFINEQGESIIVELDDPNALLKHRFEIIEGRDRTMAWTVVNSICNTTGAEKPKFLPDLYDYKENRFIEIGVTRREVHIYYLEKANKIKSEKTHIHIFSFTGEEMATKADYTLDEESRARIKTRLFTIRQEMASRGLWDSFRQSERGEETIEERFEITGTMRRLADQSLPPNFSCLENFRAYVDGFEPNGYIEGKLSQMSKEVNAKIEPFLKTTPRPIKLPDGPPCSQRSKFLLMDALKLSIEDPSHEGEGIPLYDAIKCMRTFFGWKEPYVVKPHDKGINPNYLLSWKQVLAELQDIENEEKIPRTKNMKKTSQLKWALGENMAPEKVDFDDCRDISDLKQYDSDEPELRSLSSWIQNEFNKACELTDSIWIELDEIGEDVAPIEHIASMRRNYFTAEVSQCRATEYIMKGVYINTALLNASCAAMDDFQLIPMISKCRTKEGRRKTNLYGFIIKGRSHLRNDTDVVNFVSMEFSLTDPRLEPHKWEKYCVLEIGDMLLRSAIGQVSRPMFLYVRTNGTSKIKMKWGMEMRRCLLQSLQQIESMIEAESSVKEKDMTKEFFENKSETWPIGESPKGVEEGSIGKVCRTLLAKSVFNSLYASPQLEGFSAESRKLLLVVQALRDNLEPGTFDLGGLYEAIEECLINDPWVLLNASWFNSFLTHALR</sequence>
<comment type="function">
    <text evidence="2">Plays an essential role in viral RNA transcription and replication by forming the heterotrimeric polymerase complex together with PB1 and PB2 subunits. The complex transcribes viral mRNAs by using a unique mechanism called cap-snatching. It consists in the hijacking and cleavage of host capped pre-mRNAs. These short capped RNAs are then used as primers for viral mRNAs. The PB2 subunit is responsible for the binding of the 5' cap of cellular pre-mRNAs which are subsequently cleaved after 10-13 nucleotides by the PA subunit that carries the endonuclease activity.</text>
</comment>
<comment type="cofactor">
    <cofactor evidence="2">
        <name>Mn(2+)</name>
        <dbReference type="ChEBI" id="CHEBI:29035"/>
    </cofactor>
    <text evidence="2">Binds 2 manganese ions per subunit.</text>
</comment>
<comment type="subunit">
    <text evidence="1 2">Influenza RNA polymerase is composed of three subunits: PB1, PB2 and PA. Interacts (via C-terminus) with PB1 (via N-terminus).</text>
</comment>
<comment type="subcellular location">
    <subcellularLocation>
        <location evidence="2">Host cytoplasm</location>
    </subcellularLocation>
    <subcellularLocation>
        <location evidence="2">Host nucleus</location>
    </subcellularLocation>
    <text evidence="1 2">PB1 and PA are transported in the host nucleus as a complex.</text>
</comment>
<comment type="alternative products">
    <event type="ribosomal frameshifting"/>
    <isoform>
        <id>P26122-1</id>
        <name>PA</name>
        <sequence type="displayed"/>
    </isoform>
    <isoform>
        <id>P0DJS5-1</id>
        <name>PA-X</name>
        <sequence type="external"/>
    </isoform>
</comment>
<comment type="PTM">
    <text evidence="1 2">Phosphorylated on serines and threonines by host kinases, including human casein kinase II.</text>
</comment>
<comment type="similarity">
    <text evidence="2">Belongs to the influenza viruses PA family.</text>
</comment>